<sequence length="220" mass="24883">MAYRDQPLGELALSIPRASALFRKYDMDYCCGGKQTLARAAARKELDVEVIEAELAKLAEQPIEKDWRSAPLAEIIDHIIVRYHDRHREQLPELILQATKVERVHADKPSVPKGLTKYLTMLHEELSSHMMKEEQILFPMIKQGMGSQAMGPISVMESEHDEAGELLEVIKHTTNNVTPPPEACTTWKAMYNGINELIDDLMDHISLENNVLFPRALAGE</sequence>
<evidence type="ECO:0000255" key="1">
    <source>
        <dbReference type="HAMAP-Rule" id="MF_01606"/>
    </source>
</evidence>
<feature type="chain" id="PRO_1000148176" description="Iron-sulfur cluster repair protein YtfE">
    <location>
        <begin position="1"/>
        <end position="220"/>
    </location>
</feature>
<protein>
    <recommendedName>
        <fullName evidence="1">Iron-sulfur cluster repair protein YtfE</fullName>
    </recommendedName>
</protein>
<keyword id="KW-0963">Cytoplasm</keyword>
<keyword id="KW-0408">Iron</keyword>
<keyword id="KW-0479">Metal-binding</keyword>
<keyword id="KW-0346">Stress response</keyword>
<comment type="function">
    <text evidence="1">Di-iron-containing protein involved in the repair of iron-sulfur clusters damaged by oxidative and nitrosative stress conditions.</text>
</comment>
<comment type="subunit">
    <text evidence="1">Homodimer.</text>
</comment>
<comment type="subcellular location">
    <subcellularLocation>
        <location evidence="1">Cytoplasm</location>
    </subcellularLocation>
</comment>
<comment type="similarity">
    <text evidence="1">Belongs to the RIC family. YtfE subfamily.</text>
</comment>
<dbReference type="EMBL" id="CP000948">
    <property type="protein sequence ID" value="ACB05196.1"/>
    <property type="molecule type" value="Genomic_DNA"/>
</dbReference>
<dbReference type="RefSeq" id="WP_000331456.1">
    <property type="nucleotide sequence ID" value="NC_010473.1"/>
</dbReference>
<dbReference type="SMR" id="B1XDV9"/>
<dbReference type="GeneID" id="93777612"/>
<dbReference type="KEGG" id="ecd:ECDH10B_4404"/>
<dbReference type="HOGENOM" id="CLU_076075_2_0_6"/>
<dbReference type="GO" id="GO:0005737">
    <property type="term" value="C:cytoplasm"/>
    <property type="evidence" value="ECO:0007669"/>
    <property type="project" value="UniProtKB-SubCell"/>
</dbReference>
<dbReference type="GO" id="GO:0046872">
    <property type="term" value="F:metal ion binding"/>
    <property type="evidence" value="ECO:0007669"/>
    <property type="project" value="UniProtKB-KW"/>
</dbReference>
<dbReference type="GO" id="GO:0030091">
    <property type="term" value="P:protein repair"/>
    <property type="evidence" value="ECO:0007669"/>
    <property type="project" value="UniProtKB-UniRule"/>
</dbReference>
<dbReference type="GO" id="GO:0051409">
    <property type="term" value="P:response to nitrosative stress"/>
    <property type="evidence" value="ECO:0007669"/>
    <property type="project" value="UniProtKB-UniRule"/>
</dbReference>
<dbReference type="GO" id="GO:0006979">
    <property type="term" value="P:response to oxidative stress"/>
    <property type="evidence" value="ECO:0007669"/>
    <property type="project" value="UniProtKB-UniRule"/>
</dbReference>
<dbReference type="CDD" id="cd12108">
    <property type="entry name" value="Hr-like"/>
    <property type="match status" value="1"/>
</dbReference>
<dbReference type="FunFam" id="1.20.120.520:FF:000001">
    <property type="entry name" value="Iron-sulfur cluster repair protein YtfE"/>
    <property type="match status" value="1"/>
</dbReference>
<dbReference type="Gene3D" id="1.20.120.520">
    <property type="entry name" value="nmb1532 protein domain like"/>
    <property type="match status" value="1"/>
</dbReference>
<dbReference type="HAMAP" id="MF_01606">
    <property type="entry name" value="RIC_YtfE"/>
    <property type="match status" value="1"/>
</dbReference>
<dbReference type="InterPro" id="IPR023742">
    <property type="entry name" value="FeS-repair_YftE"/>
</dbReference>
<dbReference type="InterPro" id="IPR012312">
    <property type="entry name" value="Hemerythrin-like"/>
</dbReference>
<dbReference type="InterPro" id="IPR019903">
    <property type="entry name" value="RIC_family"/>
</dbReference>
<dbReference type="NCBIfam" id="TIGR03652">
    <property type="entry name" value="FeS_repair_RIC"/>
    <property type="match status" value="1"/>
</dbReference>
<dbReference type="NCBIfam" id="NF008221">
    <property type="entry name" value="PRK10992.1"/>
    <property type="match status" value="1"/>
</dbReference>
<dbReference type="PANTHER" id="PTHR36438">
    <property type="entry name" value="IRON-SULFUR CLUSTER REPAIR PROTEIN YTFE"/>
    <property type="match status" value="1"/>
</dbReference>
<dbReference type="PANTHER" id="PTHR36438:SF1">
    <property type="entry name" value="IRON-SULFUR CLUSTER REPAIR PROTEIN YTFE"/>
    <property type="match status" value="1"/>
</dbReference>
<dbReference type="Pfam" id="PF01814">
    <property type="entry name" value="Hemerythrin"/>
    <property type="match status" value="1"/>
</dbReference>
<dbReference type="Pfam" id="PF04405">
    <property type="entry name" value="ScdA_N"/>
    <property type="match status" value="1"/>
</dbReference>
<organism>
    <name type="scientific">Escherichia coli (strain K12 / DH10B)</name>
    <dbReference type="NCBI Taxonomy" id="316385"/>
    <lineage>
        <taxon>Bacteria</taxon>
        <taxon>Pseudomonadati</taxon>
        <taxon>Pseudomonadota</taxon>
        <taxon>Gammaproteobacteria</taxon>
        <taxon>Enterobacterales</taxon>
        <taxon>Enterobacteriaceae</taxon>
        <taxon>Escherichia</taxon>
    </lineage>
</organism>
<reference key="1">
    <citation type="journal article" date="2008" name="J. Bacteriol.">
        <title>The complete genome sequence of Escherichia coli DH10B: insights into the biology of a laboratory workhorse.</title>
        <authorList>
            <person name="Durfee T."/>
            <person name="Nelson R."/>
            <person name="Baldwin S."/>
            <person name="Plunkett G. III"/>
            <person name="Burland V."/>
            <person name="Mau B."/>
            <person name="Petrosino J.F."/>
            <person name="Qin X."/>
            <person name="Muzny D.M."/>
            <person name="Ayele M."/>
            <person name="Gibbs R.A."/>
            <person name="Csorgo B."/>
            <person name="Posfai G."/>
            <person name="Weinstock G.M."/>
            <person name="Blattner F.R."/>
        </authorList>
    </citation>
    <scope>NUCLEOTIDE SEQUENCE [LARGE SCALE GENOMIC DNA]</scope>
    <source>
        <strain>K12 / DH10B</strain>
    </source>
</reference>
<gene>
    <name evidence="1" type="primary">ytfE</name>
    <name type="ordered locus">ECDH10B_4404</name>
</gene>
<accession>B1XDV9</accession>
<proteinExistence type="inferred from homology"/>
<name>YTFE_ECODH</name>